<reference key="1">
    <citation type="journal article" date="2001" name="Chem. Biol.">
        <title>Cloning and analysis of the spinosad biosynthetic gene cluster of Saccharopolyspora spinosa.</title>
        <authorList>
            <person name="Waldron C."/>
            <person name="Matsushima P."/>
            <person name="Rosteck P.R. Jr."/>
            <person name="Broughton M.C."/>
            <person name="Turner J."/>
            <person name="Madduri K."/>
            <person name="Crawford K.P."/>
            <person name="Merlo D.J."/>
            <person name="Baltz R.H."/>
        </authorList>
    </citation>
    <scope>NUCLEOTIDE SEQUENCE [GENOMIC DNA]</scope>
    <scope>FUNCTION</scope>
    <scope>DISRUPTION PHENOTYPE</scope>
</reference>
<reference key="2">
    <citation type="submission" date="2017-12" db="EMBL/GenBank/DDBJ databases">
        <title>Sequencing the genomes of 1000 Actinobacteria strains.</title>
        <authorList>
            <person name="Klenk H.-P."/>
        </authorList>
    </citation>
    <scope>NUCLEOTIDE SEQUENCE [LARGE SCALE GENOMIC DNA]</scope>
    <source>
        <strain>ATCC 49460 / DSM 44228 / JCM 9375 / NBRC 15153 / NRRL 18395 / A83543.1</strain>
    </source>
</reference>
<reference key="3">
    <citation type="journal article" date="2008" name="J. Am. Chem. Soc.">
        <title>In vitro characterization of the enzymes involved in TDP-D-forosamine biosynthesis in the spinosyn pathway of Saccharopolyspora spinosa.</title>
        <authorList>
            <person name="Hong L."/>
            <person name="Zhao Z."/>
            <person name="Melancon C.E. III"/>
            <person name="Zhang H."/>
            <person name="Liu H.W."/>
        </authorList>
    </citation>
    <scope>FUNCTION</scope>
    <scope>CATALYTIC ACTIVITY</scope>
    <scope>SUBUNIT</scope>
    <source>
        <strain>NRRL 18537</strain>
    </source>
</reference>
<protein>
    <recommendedName>
        <fullName evidence="5">dTDP-4-dehydro-6-deoxy-alpha-D-glucopyranose 2,3-dehydratase</fullName>
        <ecNumber evidence="3">4.2.1.159</ecNumber>
    </recommendedName>
    <alternativeName>
        <fullName evidence="5">2,3-dehydratase</fullName>
    </alternativeName>
    <alternativeName>
        <fullName evidence="5">dTDP-4-keto-6-deoxy-D-glucose 2,3-dehydratase</fullName>
    </alternativeName>
</protein>
<evidence type="ECO:0000250" key="1">
    <source>
        <dbReference type="UniProtKB" id="O52793"/>
    </source>
</evidence>
<evidence type="ECO:0000269" key="2">
    <source>
    </source>
</evidence>
<evidence type="ECO:0000269" key="3">
    <source>
    </source>
</evidence>
<evidence type="ECO:0000303" key="4">
    <source>
    </source>
</evidence>
<evidence type="ECO:0000303" key="5">
    <source>
    </source>
</evidence>
<evidence type="ECO:0000305" key="6"/>
<evidence type="ECO:0000312" key="7">
    <source>
        <dbReference type="EMBL" id="PKW18366.1"/>
    </source>
</evidence>
<dbReference type="EC" id="4.2.1.159" evidence="3"/>
<dbReference type="EMBL" id="AY007564">
    <property type="protein sequence ID" value="AAG23276.1"/>
    <property type="molecule type" value="Genomic_DNA"/>
</dbReference>
<dbReference type="EMBL" id="PJNB01000001">
    <property type="protein sequence ID" value="PKW18366.1"/>
    <property type="molecule type" value="Genomic_DNA"/>
</dbReference>
<dbReference type="RefSeq" id="WP_010309423.1">
    <property type="nucleotide sequence ID" value="NZ_PJNB01000001.1"/>
</dbReference>
<dbReference type="SMR" id="Q9ALN6"/>
<dbReference type="STRING" id="994479.GCA_000194155_04542"/>
<dbReference type="KEGG" id="ag:AAG23276"/>
<dbReference type="OrthoDB" id="9814961at2"/>
<dbReference type="BioCyc" id="MetaCyc:MONOMER-16619"/>
<dbReference type="BRENDA" id="4.2.1.159">
    <property type="organism ID" value="13744"/>
</dbReference>
<dbReference type="Proteomes" id="UP000233786">
    <property type="component" value="Unassembled WGS sequence"/>
</dbReference>
<dbReference type="GO" id="GO:0016829">
    <property type="term" value="F:lyase activity"/>
    <property type="evidence" value="ECO:0007669"/>
    <property type="project" value="UniProtKB-KW"/>
</dbReference>
<dbReference type="Gene3D" id="3.90.79.40">
    <property type="entry name" value="EvaA sugar 2,3-dehydratase subunit"/>
    <property type="match status" value="2"/>
</dbReference>
<dbReference type="InterPro" id="IPR005212">
    <property type="entry name" value="EvaA-like"/>
</dbReference>
<dbReference type="InterPro" id="IPR038153">
    <property type="entry name" value="EvaA-like_sf"/>
</dbReference>
<dbReference type="Pfam" id="PF03559">
    <property type="entry name" value="Hexose_dehydrat"/>
    <property type="match status" value="2"/>
</dbReference>
<proteinExistence type="evidence at protein level"/>
<feature type="chain" id="PRO_0000444211" description="dTDP-4-dehydro-6-deoxy-alpha-D-glucopyranose 2,3-dehydratase">
    <location>
        <begin position="1"/>
        <end position="486"/>
    </location>
</feature>
<feature type="binding site" description="from pocket A" evidence="1">
    <location>
        <position position="66"/>
    </location>
    <ligand>
        <name>dTDP-4-dehydro-6-deoxy-alpha-D-glucose</name>
        <dbReference type="ChEBI" id="CHEBI:57649"/>
        <label>1</label>
    </ligand>
</feature>
<feature type="binding site" description="from pocket A" evidence="1">
    <location>
        <begin position="149"/>
        <end position="153"/>
    </location>
    <ligand>
        <name>dTDP-4-dehydro-6-deoxy-alpha-D-glucose</name>
        <dbReference type="ChEBI" id="CHEBI:57649"/>
        <label>1</label>
    </ligand>
</feature>
<feature type="binding site" description="from pocket B" evidence="1">
    <location>
        <position position="187"/>
    </location>
    <ligand>
        <name>dTDP-4-dehydro-6-deoxy-alpha-D-glucose</name>
        <dbReference type="ChEBI" id="CHEBI:57649"/>
        <label>2</label>
    </ligand>
</feature>
<feature type="binding site" description="from pocket B" evidence="1">
    <location>
        <position position="304"/>
    </location>
    <ligand>
        <name>dTDP-4-dehydro-6-deoxy-alpha-D-glucose</name>
        <dbReference type="ChEBI" id="CHEBI:57649"/>
        <label>2</label>
    </ligand>
</feature>
<feature type="binding site" description="from pocket B" evidence="1">
    <location>
        <position position="367"/>
    </location>
    <ligand>
        <name>dTDP-4-dehydro-6-deoxy-alpha-D-glucose</name>
        <dbReference type="ChEBI" id="CHEBI:57649"/>
        <label>2</label>
    </ligand>
</feature>
<feature type="binding site" description="from pocket B" evidence="1">
    <location>
        <begin position="383"/>
        <end position="385"/>
    </location>
    <ligand>
        <name>dTDP-4-dehydro-6-deoxy-alpha-D-glucose</name>
        <dbReference type="ChEBI" id="CHEBI:57649"/>
        <label>2</label>
    </ligand>
</feature>
<feature type="binding site" description="from pocket B" evidence="1">
    <location>
        <begin position="388"/>
        <end position="389"/>
    </location>
    <ligand>
        <name>dTDP-4-dehydro-6-deoxy-alpha-D-glucose</name>
        <dbReference type="ChEBI" id="CHEBI:57649"/>
        <label>2</label>
    </ligand>
</feature>
<feature type="binding site" description="from pocket A" evidence="1">
    <location>
        <begin position="421"/>
        <end position="424"/>
    </location>
    <ligand>
        <name>dTDP-4-dehydro-6-deoxy-alpha-D-glucose</name>
        <dbReference type="ChEBI" id="CHEBI:57649"/>
        <label>1</label>
    </ligand>
</feature>
<name>SPNO_SACSN</name>
<comment type="function">
    <text evidence="2 3">Involved in the biosynthesis of forosamine ((4-dimethylamino)-2,3,4,6-tetradeoxy-alpha-D-threo-hexopyranose), a highly deoxygenated sugar component of several bioactive natural products such as the insecticidal spinosyns A and D (PubMed:11358695, PubMed:18345667). Catalyzes the removal of the hydroxyl group at position C-2 of the hexose ring of dTDP-4-dehydro-6-deoxy-alpha-D-glucopyranose, and the oxidation of the hydroxyl group at position C-3 to form a carbonyl functionality (PubMed:18345667). The product of the reaction, dTDP-2,6-dideoxy-D-glycero-hex-2-enos-4-ulose, is a highly unstable diketosugar, which spontaneously forms dTDP-3,4-didehydro-2,6-dideoxy-alpha-D-glucose (PubMed:18345667).</text>
</comment>
<comment type="catalytic activity">
    <reaction evidence="3">
        <text>dTDP-4-dehydro-6-deoxy-alpha-D-glucose = dTDP-3,4-didehydro-2,6-dideoxy-alpha-D-glucose + H2O</text>
        <dbReference type="Rhea" id="RHEA:47972"/>
        <dbReference type="ChEBI" id="CHEBI:15377"/>
        <dbReference type="ChEBI" id="CHEBI:57649"/>
        <dbReference type="ChEBI" id="CHEBI:84540"/>
        <dbReference type="EC" id="4.2.1.159"/>
    </reaction>
</comment>
<comment type="subunit">
    <text evidence="3">Homodimer.</text>
</comment>
<comment type="disruption phenotype">
    <text evidence="2">Cells lacking this gene accumulate the pseudoaglycone (PSA) containing tri-O-methyl rhamnose, but lacking the dimethylamino sugar forosamine.</text>
</comment>
<comment type="miscellaneous">
    <text evidence="1">Two binding sites (pockets A and B) for the dTDP-sugar ligands have been identified in each subunit. It seems that pocket A represents the active site and pocket B is a vestige of the gene duplication event.</text>
</comment>
<comment type="similarity">
    <text evidence="6">Belongs to the hexose 2,3-dehydratase family.</text>
</comment>
<sequence length="486" mass="54393">MSSSVEAEASAAAPLGSNNTRRFVDSALSACNGMIPTTEFHCWLADRLGENSFETNRIPFDRLSKWKFDASTENLVHADGRFFTVEGLQVETNYGAAPSWHQPIINQAEVGILGILVKEIDGVLHCLMSAKMEPGNVNVLQLSPTVQATRSNYTQAHRGSVPPYVDYFLGRGRGRVLVDVLQSEQGSWFYRKRNRNMVVEVQEEVPVLPDFCWLTLGQVLALLRQDNIVNMDTRTVLSCIPFHDSATGPELAASEEPFRQAVARSLSHGIDSSSISEAVGWFEEAKARYRLRATRVPLSRVDKWYRTDTEIAHQDGKYFAVIAVSVSATNREVASWTQPMIEPREQGEIALLVKRIGGVLHGLVHARVEAGYKWTAEIAPTVQCSVANYQSTPSNDWPPFLDDVLTADPETVRYESILSEEGGRFYQAQNRYRIIEVHEDFAARPPSDFRWMTLGQLGELLRSTHFLNIQARSLVASLHSLWALGR</sequence>
<organism>
    <name type="scientific">Saccharopolyspora spinosa</name>
    <dbReference type="NCBI Taxonomy" id="60894"/>
    <lineage>
        <taxon>Bacteria</taxon>
        <taxon>Bacillati</taxon>
        <taxon>Actinomycetota</taxon>
        <taxon>Actinomycetes</taxon>
        <taxon>Pseudonocardiales</taxon>
        <taxon>Pseudonocardiaceae</taxon>
        <taxon>Saccharopolyspora</taxon>
    </lineage>
</organism>
<accession>Q9ALN6</accession>
<keyword id="KW-0456">Lyase</keyword>
<gene>
    <name evidence="4" type="primary">spnO</name>
    <name evidence="7" type="ORF">A8926_6443</name>
</gene>